<reference key="1">
    <citation type="submission" date="2008-02" db="EMBL/GenBank/DDBJ databases">
        <title>Complete sequence of Escherichia coli C str. ATCC 8739.</title>
        <authorList>
            <person name="Copeland A."/>
            <person name="Lucas S."/>
            <person name="Lapidus A."/>
            <person name="Glavina del Rio T."/>
            <person name="Dalin E."/>
            <person name="Tice H."/>
            <person name="Bruce D."/>
            <person name="Goodwin L."/>
            <person name="Pitluck S."/>
            <person name="Kiss H."/>
            <person name="Brettin T."/>
            <person name="Detter J.C."/>
            <person name="Han C."/>
            <person name="Kuske C.R."/>
            <person name="Schmutz J."/>
            <person name="Larimer F."/>
            <person name="Land M."/>
            <person name="Hauser L."/>
            <person name="Kyrpides N."/>
            <person name="Mikhailova N."/>
            <person name="Ingram L."/>
            <person name="Richardson P."/>
        </authorList>
    </citation>
    <scope>NUCLEOTIDE SEQUENCE [LARGE SCALE GENOMIC DNA]</scope>
    <source>
        <strain>ATCC 8739 / DSM 1576 / NBRC 3972 / NCIMB 8545 / WDCM 00012 / Crooks</strain>
    </source>
</reference>
<comment type="similarity">
    <text evidence="1">Belongs to the DsrB family.</text>
</comment>
<sequence>MKVNDRVTVKTDGGPRRPGVVLAVEEFSEGTMYLVSLEDYPLGIWFFNEAGHQDGIFVEKAE</sequence>
<protein>
    <recommendedName>
        <fullName evidence="1">Protein DsrB</fullName>
    </recommendedName>
</protein>
<accession>B1IZV7</accession>
<proteinExistence type="inferred from homology"/>
<feature type="chain" id="PRO_1000087728" description="Protein DsrB">
    <location>
        <begin position="1"/>
        <end position="62"/>
    </location>
</feature>
<gene>
    <name evidence="1" type="primary">dsrB</name>
    <name type="ordered locus">EcolC_1690</name>
</gene>
<dbReference type="EMBL" id="CP000946">
    <property type="protein sequence ID" value="ACA77342.1"/>
    <property type="molecule type" value="Genomic_DNA"/>
</dbReference>
<dbReference type="RefSeq" id="WP_000867217.1">
    <property type="nucleotide sequence ID" value="NZ_MTFT01000011.1"/>
</dbReference>
<dbReference type="SMR" id="B1IZV7"/>
<dbReference type="GeneID" id="93775233"/>
<dbReference type="KEGG" id="ecl:EcolC_1690"/>
<dbReference type="HOGENOM" id="CLU_189289_0_0_6"/>
<dbReference type="HAMAP" id="MF_01549">
    <property type="entry name" value="DsrB"/>
    <property type="match status" value="1"/>
</dbReference>
<dbReference type="InterPro" id="IPR019717">
    <property type="entry name" value="Dextransucrase_DSRB"/>
</dbReference>
<dbReference type="NCBIfam" id="NF007981">
    <property type="entry name" value="PRK10708.1"/>
    <property type="match status" value="1"/>
</dbReference>
<dbReference type="Pfam" id="PF10781">
    <property type="entry name" value="DSRB"/>
    <property type="match status" value="1"/>
</dbReference>
<evidence type="ECO:0000255" key="1">
    <source>
        <dbReference type="HAMAP-Rule" id="MF_01549"/>
    </source>
</evidence>
<organism>
    <name type="scientific">Escherichia coli (strain ATCC 8739 / DSM 1576 / NBRC 3972 / NCIMB 8545 / WDCM 00012 / Crooks)</name>
    <dbReference type="NCBI Taxonomy" id="481805"/>
    <lineage>
        <taxon>Bacteria</taxon>
        <taxon>Pseudomonadati</taxon>
        <taxon>Pseudomonadota</taxon>
        <taxon>Gammaproteobacteria</taxon>
        <taxon>Enterobacterales</taxon>
        <taxon>Enterobacteriaceae</taxon>
        <taxon>Escherichia</taxon>
    </lineage>
</organism>
<name>DSRB_ECOLC</name>